<keyword id="KW-0025">Alternative splicing</keyword>
<keyword id="KW-0963">Cytoplasm</keyword>
<keyword id="KW-0968">Cytoplasmic vesicle</keyword>
<keyword id="KW-0333">Golgi apparatus</keyword>
<keyword id="KW-0472">Membrane</keyword>
<keyword id="KW-0653">Protein transport</keyword>
<keyword id="KW-1185">Reference proteome</keyword>
<keyword id="KW-0813">Transport</keyword>
<accession>Q9M2T1</accession>
<accession>Q93YS9</accession>
<comment type="function">
    <text evidence="3 4">Part of the AP-3 complex, an adaptor-related complex which seems to be clathrin-associated. The complex is associated with the Golgi region as well as more peripheral structures. It facilitates the budding of vesicles from the Golgi membrane and may be directly involved in trafficking to the vacuole. It also function in maintaining the identity of lytic vacuoles and in regulating the transition between storage and lytic vacuoles.</text>
</comment>
<comment type="subunit">
    <text>Adaptor protein complex 3 (AP-3) is a heterotetramer composed of two large adaptins (delta-type subunit and beta-type subunit), a medium adaptin (mu-type subunit) and a small adaptin (sigma-type subunit).</text>
</comment>
<comment type="subcellular location">
    <subcellularLocation>
        <location evidence="3">Cytoplasm</location>
    </subcellularLocation>
    <subcellularLocation>
        <location evidence="3">Golgi apparatus</location>
    </subcellularLocation>
    <subcellularLocation>
        <location evidence="3">Cytoplasmic vesicle membrane</location>
        <topology evidence="3">Peripheral membrane protein</topology>
        <orientation evidence="3">Cytoplasmic side</orientation>
    </subcellularLocation>
    <text>Component of the coat surrounding the cytoplasmic face of coated vesicles located at the Golgi complex.</text>
</comment>
<comment type="alternative products">
    <event type="alternative splicing"/>
    <isoform>
        <id>Q9M2T1-1</id>
        <name>1</name>
        <sequence type="displayed"/>
    </isoform>
    <text>A number of isoforms are produced. According to EST sequences.</text>
</comment>
<comment type="disruption phenotype">
    <text evidence="2 3 4">No obvious phenotype except defective lytic vacuoles with altered morphology and accumulation of proteins.</text>
</comment>
<comment type="similarity">
    <text evidence="5">Belongs to the adaptor complexes large subunit family.</text>
</comment>
<comment type="sequence caution" evidence="5">
    <conflict type="erroneous gene model prediction">
        <sequence resource="EMBL-CDS" id="CAB75906"/>
    </conflict>
</comment>
<name>AP3BA_ARATH</name>
<organism>
    <name type="scientific">Arabidopsis thaliana</name>
    <name type="common">Mouse-ear cress</name>
    <dbReference type="NCBI Taxonomy" id="3702"/>
    <lineage>
        <taxon>Eukaryota</taxon>
        <taxon>Viridiplantae</taxon>
        <taxon>Streptophyta</taxon>
        <taxon>Embryophyta</taxon>
        <taxon>Tracheophyta</taxon>
        <taxon>Spermatophyta</taxon>
        <taxon>Magnoliopsida</taxon>
        <taxon>eudicotyledons</taxon>
        <taxon>Gunneridae</taxon>
        <taxon>Pentapetalae</taxon>
        <taxon>rosids</taxon>
        <taxon>malvids</taxon>
        <taxon>Brassicales</taxon>
        <taxon>Brassicaceae</taxon>
        <taxon>Camelineae</taxon>
        <taxon>Arabidopsis</taxon>
    </lineage>
</organism>
<proteinExistence type="evidence at transcript level"/>
<dbReference type="EMBL" id="AL132975">
    <property type="protein sequence ID" value="CAB75906.1"/>
    <property type="status" value="ALT_SEQ"/>
    <property type="molecule type" value="Genomic_DNA"/>
</dbReference>
<dbReference type="EMBL" id="CP002686">
    <property type="protein sequence ID" value="AEE79390.1"/>
    <property type="molecule type" value="Genomic_DNA"/>
</dbReference>
<dbReference type="EMBL" id="AY059780">
    <property type="protein sequence ID" value="AAL24128.1"/>
    <property type="molecule type" value="mRNA"/>
</dbReference>
<dbReference type="PIR" id="T47687">
    <property type="entry name" value="T47687"/>
</dbReference>
<dbReference type="RefSeq" id="NP_567022.1">
    <molecule id="Q9M2T1-1"/>
    <property type="nucleotide sequence ID" value="NM_115406.5"/>
</dbReference>
<dbReference type="SMR" id="Q9M2T1"/>
<dbReference type="BioGRID" id="10030">
    <property type="interactions" value="2"/>
</dbReference>
<dbReference type="FunCoup" id="Q9M2T1">
    <property type="interactions" value="2260"/>
</dbReference>
<dbReference type="STRING" id="3702.Q9M2T1"/>
<dbReference type="iPTMnet" id="Q9M2T1"/>
<dbReference type="PaxDb" id="3702-AT3G55480.2"/>
<dbReference type="EnsemblPlants" id="AT3G55480.1">
    <molecule id="Q9M2T1-1"/>
    <property type="protein sequence ID" value="AT3G55480.1"/>
    <property type="gene ID" value="AT3G55480"/>
</dbReference>
<dbReference type="GeneID" id="824714"/>
<dbReference type="Gramene" id="AT3G55480.1">
    <molecule id="Q9M2T1-1"/>
    <property type="protein sequence ID" value="AT3G55480.1"/>
    <property type="gene ID" value="AT3G55480"/>
</dbReference>
<dbReference type="KEGG" id="ath:AT3G55480"/>
<dbReference type="Araport" id="AT3G55480"/>
<dbReference type="TAIR" id="AT3G55480">
    <property type="gene designation" value="PAT2"/>
</dbReference>
<dbReference type="eggNOG" id="KOG1060">
    <property type="taxonomic scope" value="Eukaryota"/>
</dbReference>
<dbReference type="InParanoid" id="Q9M2T1"/>
<dbReference type="PhylomeDB" id="Q9M2T1"/>
<dbReference type="PRO" id="PR:Q9M2T1"/>
<dbReference type="Proteomes" id="UP000006548">
    <property type="component" value="Chromosome 3"/>
</dbReference>
<dbReference type="ExpressionAtlas" id="Q9M2T1">
    <property type="expression patterns" value="baseline and differential"/>
</dbReference>
<dbReference type="GO" id="GO:0030659">
    <property type="term" value="C:cytoplasmic vesicle membrane"/>
    <property type="evidence" value="ECO:0007669"/>
    <property type="project" value="UniProtKB-SubCell"/>
</dbReference>
<dbReference type="GO" id="GO:0005794">
    <property type="term" value="C:Golgi apparatus"/>
    <property type="evidence" value="ECO:0007669"/>
    <property type="project" value="UniProtKB-SubCell"/>
</dbReference>
<dbReference type="GO" id="GO:0030117">
    <property type="term" value="C:membrane coat"/>
    <property type="evidence" value="ECO:0007669"/>
    <property type="project" value="InterPro"/>
</dbReference>
<dbReference type="GO" id="GO:0006886">
    <property type="term" value="P:intracellular protein transport"/>
    <property type="evidence" value="ECO:0007669"/>
    <property type="project" value="InterPro"/>
</dbReference>
<dbReference type="GO" id="GO:0016192">
    <property type="term" value="P:vesicle-mediated transport"/>
    <property type="evidence" value="ECO:0007669"/>
    <property type="project" value="InterPro"/>
</dbReference>
<dbReference type="Gene3D" id="1.25.10.10">
    <property type="entry name" value="Leucine-rich Repeat Variant"/>
    <property type="match status" value="1"/>
</dbReference>
<dbReference type="InterPro" id="IPR056314">
    <property type="entry name" value="AP3B1/2_C"/>
</dbReference>
<dbReference type="InterPro" id="IPR029390">
    <property type="entry name" value="AP3B_C"/>
</dbReference>
<dbReference type="InterPro" id="IPR026739">
    <property type="entry name" value="AP_beta"/>
</dbReference>
<dbReference type="InterPro" id="IPR011989">
    <property type="entry name" value="ARM-like"/>
</dbReference>
<dbReference type="InterPro" id="IPR016024">
    <property type="entry name" value="ARM-type_fold"/>
</dbReference>
<dbReference type="InterPro" id="IPR002553">
    <property type="entry name" value="Clathrin/coatomer_adapt-like_N"/>
</dbReference>
<dbReference type="PANTHER" id="PTHR11134">
    <property type="entry name" value="ADAPTOR COMPLEX SUBUNIT BETA FAMILY MEMBER"/>
    <property type="match status" value="1"/>
</dbReference>
<dbReference type="Pfam" id="PF01602">
    <property type="entry name" value="Adaptin_N"/>
    <property type="match status" value="1"/>
</dbReference>
<dbReference type="Pfam" id="PF24080">
    <property type="entry name" value="AP3B1_C_2"/>
    <property type="match status" value="1"/>
</dbReference>
<dbReference type="SMART" id="SM01355">
    <property type="entry name" value="AP3B1_C"/>
    <property type="match status" value="1"/>
</dbReference>
<dbReference type="SUPFAM" id="SSF48371">
    <property type="entry name" value="ARM repeat"/>
    <property type="match status" value="1"/>
</dbReference>
<protein>
    <recommendedName>
        <fullName>AP3-complex subunit beta-A</fullName>
    </recommendedName>
    <alternativeName>
        <fullName>Adaptor protein complex AP-3 subunit beta-A</fullName>
    </alternativeName>
    <alternativeName>
        <fullName>Adaptor-related protein complex 3 subunit beta-A</fullName>
    </alternativeName>
    <alternativeName>
        <fullName>Beta-3B-adaptin</fullName>
    </alternativeName>
    <alternativeName>
        <fullName>Clathrin assembly protein complex 3 beta-A large chain</fullName>
    </alternativeName>
    <alternativeName>
        <fullName>Protein-affected trafficking 2</fullName>
    </alternativeName>
</protein>
<gene>
    <name type="primary">AP3BA</name>
    <name type="synonym">PAT2</name>
    <name type="ordered locus">At3g55480</name>
    <name type="ORF">T22E16.140</name>
</gene>
<sequence length="987" mass="108650">MAGIRLHVIAPLALAAVSKCARDPAVYVRRCAANALPKLHDLRLEEHASAIEELVGILLNDHSPGVVGAAAAAFTSICPNNFKLIGKNYKKLCQILPDVEEWGQILLIGTLLRYVVARHGLVRESLMLSIHGTNSNGFCEKDGLGRDLTLDKEDGGKSDSFDVNLVSLVSKCYIQGPDEYLSRSSCTDTVSSAFDTKETTSIAHNEDVKILLQCTSPLLWSNNSAVVLAAAGVQWIMAPLEDVKKIVKPLLFLLRSSSASKYVVLCNILVFAKAVPSLFAPHFENFFICSSDAYQVKAYKLEMLSLIATTSSIASILREFEDYIKDPDRRFAADTVAAIGLCAKRLMTIPTTCLDGLLALVRQESFAGDFESADGEAGVLVQAVMSIQTMIERDPLRHEKVLIQLFRSLDSIKVAAARATIIWMVGVYCSLGHIIPRMLTTITKYLAWSFKSEASETKLQILNTIAKVLISAEAGDFHMLKRIVVYVFELGEYDLSYDIRDRTRFLKKLLSCKLASHEPAEDSVASQENIAAHVVEHVFGRKLKSVSPITLHNRFYLPGSLSQIVLHAAPGYEPLPKPCSFVYEEQDQLSDLDKQREAAADLDGSEESSETGDENGSSDYDSESSNGSDFSSEGDERTVSNDANDPAAPLIQISETSVSADQEELRSRRALDLWLDDQPSTSNQTPSALNSNQSSYAKISIGDVGSRVKPKSYSLVDPGNGSGLKVDYAFLSEVSNVSPLHVCVEVLFENSSAEPILEVNLEDEESMKVADSSEQTLVGKANASYNNIPTLIPMEEISCLEPHQSTKRLIQVRFHHHLLPMRLTLHYNEKKVPVKLRPDLGYLVKPFSMSIEEFLATESRLPGMFEYSRRCTFDDHVKDSRTENGKDKFLSICESITLKVLSNSNLHLVSVDLPVANSLEDATGLRLRFSSKILSSEIPLLITITVEGKCTEVLNLTVKINCEETVFGLNLLNRIANFMVEPSSSAT</sequence>
<evidence type="ECO:0000256" key="1">
    <source>
        <dbReference type="SAM" id="MobiDB-lite"/>
    </source>
</evidence>
<evidence type="ECO:0000269" key="2">
    <source>
    </source>
</evidence>
<evidence type="ECO:0000269" key="3">
    <source>
    </source>
</evidence>
<evidence type="ECO:0000269" key="4">
    <source>
    </source>
</evidence>
<evidence type="ECO:0000305" key="5"/>
<feature type="chain" id="PRO_0000397851" description="AP3-complex subunit beta-A">
    <location>
        <begin position="1"/>
        <end position="987"/>
    </location>
</feature>
<feature type="region of interest" description="Disordered" evidence="1">
    <location>
        <begin position="586"/>
        <end position="662"/>
    </location>
</feature>
<feature type="compositionally biased region" description="Acidic residues" evidence="1">
    <location>
        <begin position="603"/>
        <end position="613"/>
    </location>
</feature>
<feature type="compositionally biased region" description="Low complexity" evidence="1">
    <location>
        <begin position="614"/>
        <end position="631"/>
    </location>
</feature>
<feature type="sequence conflict" description="In Ref. 3; AAL24128." evidence="5" ref="3">
    <original>H</original>
    <variation>R</variation>
    <location>
        <position position="398"/>
    </location>
</feature>
<feature type="sequence conflict" description="In Ref. 3; AAL24128." evidence="5" ref="3">
    <original>E</original>
    <variation>G</variation>
    <location>
        <position position="764"/>
    </location>
</feature>
<reference key="1">
    <citation type="journal article" date="2000" name="Nature">
        <title>Sequence and analysis of chromosome 3 of the plant Arabidopsis thaliana.</title>
        <authorList>
            <person name="Salanoubat M."/>
            <person name="Lemcke K."/>
            <person name="Rieger M."/>
            <person name="Ansorge W."/>
            <person name="Unseld M."/>
            <person name="Fartmann B."/>
            <person name="Valle G."/>
            <person name="Bloecker H."/>
            <person name="Perez-Alonso M."/>
            <person name="Obermaier B."/>
            <person name="Delseny M."/>
            <person name="Boutry M."/>
            <person name="Grivell L.A."/>
            <person name="Mache R."/>
            <person name="Puigdomenech P."/>
            <person name="De Simone V."/>
            <person name="Choisne N."/>
            <person name="Artiguenave F."/>
            <person name="Robert C."/>
            <person name="Brottier P."/>
            <person name="Wincker P."/>
            <person name="Cattolico L."/>
            <person name="Weissenbach J."/>
            <person name="Saurin W."/>
            <person name="Quetier F."/>
            <person name="Schaefer M."/>
            <person name="Mueller-Auer S."/>
            <person name="Gabel C."/>
            <person name="Fuchs M."/>
            <person name="Benes V."/>
            <person name="Wurmbach E."/>
            <person name="Drzonek H."/>
            <person name="Erfle H."/>
            <person name="Jordan N."/>
            <person name="Bangert S."/>
            <person name="Wiedelmann R."/>
            <person name="Kranz H."/>
            <person name="Voss H."/>
            <person name="Holland R."/>
            <person name="Brandt P."/>
            <person name="Nyakatura G."/>
            <person name="Vezzi A."/>
            <person name="D'Angelo M."/>
            <person name="Pallavicini A."/>
            <person name="Toppo S."/>
            <person name="Simionati B."/>
            <person name="Conrad A."/>
            <person name="Hornischer K."/>
            <person name="Kauer G."/>
            <person name="Loehnert T.-H."/>
            <person name="Nordsiek G."/>
            <person name="Reichelt J."/>
            <person name="Scharfe M."/>
            <person name="Schoen O."/>
            <person name="Bargues M."/>
            <person name="Terol J."/>
            <person name="Climent J."/>
            <person name="Navarro P."/>
            <person name="Collado C."/>
            <person name="Perez-Perez A."/>
            <person name="Ottenwaelder B."/>
            <person name="Duchemin D."/>
            <person name="Cooke R."/>
            <person name="Laudie M."/>
            <person name="Berger-Llauro C."/>
            <person name="Purnelle B."/>
            <person name="Masuy D."/>
            <person name="de Haan M."/>
            <person name="Maarse A.C."/>
            <person name="Alcaraz J.-P."/>
            <person name="Cottet A."/>
            <person name="Casacuberta E."/>
            <person name="Monfort A."/>
            <person name="Argiriou A."/>
            <person name="Flores M."/>
            <person name="Liguori R."/>
            <person name="Vitale D."/>
            <person name="Mannhaupt G."/>
            <person name="Haase D."/>
            <person name="Schoof H."/>
            <person name="Rudd S."/>
            <person name="Zaccaria P."/>
            <person name="Mewes H.-W."/>
            <person name="Mayer K.F.X."/>
            <person name="Kaul S."/>
            <person name="Town C.D."/>
            <person name="Koo H.L."/>
            <person name="Tallon L.J."/>
            <person name="Jenkins J."/>
            <person name="Rooney T."/>
            <person name="Rizzo M."/>
            <person name="Walts A."/>
            <person name="Utterback T."/>
            <person name="Fujii C.Y."/>
            <person name="Shea T.P."/>
            <person name="Creasy T.H."/>
            <person name="Haas B."/>
            <person name="Maiti R."/>
            <person name="Wu D."/>
            <person name="Peterson J."/>
            <person name="Van Aken S."/>
            <person name="Pai G."/>
            <person name="Militscher J."/>
            <person name="Sellers P."/>
            <person name="Gill J.E."/>
            <person name="Feldblyum T.V."/>
            <person name="Preuss D."/>
            <person name="Lin X."/>
            <person name="Nierman W.C."/>
            <person name="Salzberg S.L."/>
            <person name="White O."/>
            <person name="Venter J.C."/>
            <person name="Fraser C.M."/>
            <person name="Kaneko T."/>
            <person name="Nakamura Y."/>
            <person name="Sato S."/>
            <person name="Kato T."/>
            <person name="Asamizu E."/>
            <person name="Sasamoto S."/>
            <person name="Kimura T."/>
            <person name="Idesawa K."/>
            <person name="Kawashima K."/>
            <person name="Kishida Y."/>
            <person name="Kiyokawa C."/>
            <person name="Kohara M."/>
            <person name="Matsumoto M."/>
            <person name="Matsuno A."/>
            <person name="Muraki A."/>
            <person name="Nakayama S."/>
            <person name="Nakazaki N."/>
            <person name="Shinpo S."/>
            <person name="Takeuchi C."/>
            <person name="Wada T."/>
            <person name="Watanabe A."/>
            <person name="Yamada M."/>
            <person name="Yasuda M."/>
            <person name="Tabata S."/>
        </authorList>
    </citation>
    <scope>NUCLEOTIDE SEQUENCE [LARGE SCALE GENOMIC DNA]</scope>
    <source>
        <strain>cv. Columbia</strain>
    </source>
</reference>
<reference key="2">
    <citation type="journal article" date="2017" name="Plant J.">
        <title>Araport11: a complete reannotation of the Arabidopsis thaliana reference genome.</title>
        <authorList>
            <person name="Cheng C.Y."/>
            <person name="Krishnakumar V."/>
            <person name="Chan A.P."/>
            <person name="Thibaud-Nissen F."/>
            <person name="Schobel S."/>
            <person name="Town C.D."/>
        </authorList>
    </citation>
    <scope>GENOME REANNOTATION</scope>
    <source>
        <strain>cv. Columbia</strain>
    </source>
</reference>
<reference key="3">
    <citation type="journal article" date="2003" name="Science">
        <title>Empirical analysis of transcriptional activity in the Arabidopsis genome.</title>
        <authorList>
            <person name="Yamada K."/>
            <person name="Lim J."/>
            <person name="Dale J.M."/>
            <person name="Chen H."/>
            <person name="Shinn P."/>
            <person name="Palm C.J."/>
            <person name="Southwick A.M."/>
            <person name="Wu H.C."/>
            <person name="Kim C.J."/>
            <person name="Nguyen M."/>
            <person name="Pham P.K."/>
            <person name="Cheuk R.F."/>
            <person name="Karlin-Newmann G."/>
            <person name="Liu S.X."/>
            <person name="Lam B."/>
            <person name="Sakano H."/>
            <person name="Wu T."/>
            <person name="Yu G."/>
            <person name="Miranda M."/>
            <person name="Quach H.L."/>
            <person name="Tripp M."/>
            <person name="Chang C.H."/>
            <person name="Lee J.M."/>
            <person name="Toriumi M.J."/>
            <person name="Chan M.M."/>
            <person name="Tang C.C."/>
            <person name="Onodera C.S."/>
            <person name="Deng J.M."/>
            <person name="Akiyama K."/>
            <person name="Ansari Y."/>
            <person name="Arakawa T."/>
            <person name="Banh J."/>
            <person name="Banno F."/>
            <person name="Bowser L."/>
            <person name="Brooks S.Y."/>
            <person name="Carninci P."/>
            <person name="Chao Q."/>
            <person name="Choy N."/>
            <person name="Enju A."/>
            <person name="Goldsmith A.D."/>
            <person name="Gurjal M."/>
            <person name="Hansen N.F."/>
            <person name="Hayashizaki Y."/>
            <person name="Johnson-Hopson C."/>
            <person name="Hsuan V.W."/>
            <person name="Iida K."/>
            <person name="Karnes M."/>
            <person name="Khan S."/>
            <person name="Koesema E."/>
            <person name="Ishida J."/>
            <person name="Jiang P.X."/>
            <person name="Jones T."/>
            <person name="Kawai J."/>
            <person name="Kamiya A."/>
            <person name="Meyers C."/>
            <person name="Nakajima M."/>
            <person name="Narusaka M."/>
            <person name="Seki M."/>
            <person name="Sakurai T."/>
            <person name="Satou M."/>
            <person name="Tamse R."/>
            <person name="Vaysberg M."/>
            <person name="Wallender E.K."/>
            <person name="Wong C."/>
            <person name="Yamamura Y."/>
            <person name="Yuan S."/>
            <person name="Shinozaki K."/>
            <person name="Davis R.W."/>
            <person name="Theologis A."/>
            <person name="Ecker J.R."/>
        </authorList>
    </citation>
    <scope>NUCLEOTIDE SEQUENCE [LARGE SCALE MRNA]</scope>
    <source>
        <strain>cv. Columbia</strain>
    </source>
</reference>
<reference key="4">
    <citation type="journal article" date="2001" name="Mol. Biol. Cell">
        <title>Adaptins: the final recount.</title>
        <authorList>
            <person name="Boehm M."/>
            <person name="Bonifacino J.S."/>
        </authorList>
    </citation>
    <scope>GENE FAMILY</scope>
    <scope>REVIEW</scope>
</reference>
<reference key="5">
    <citation type="journal article" date="2009" name="Plant Cell Physiol.">
        <title>ZIP genes encode proteins involved in membrane trafficking of the TGN-PVC/vacuoles.</title>
        <authorList>
            <person name="Niihama M."/>
            <person name="Takemoto N."/>
            <person name="Hashiguchi Y."/>
            <person name="Tasaka M."/>
            <person name="Morita M.T."/>
        </authorList>
    </citation>
    <scope>DISRUPTION PHENOTYPE</scope>
</reference>
<reference key="6">
    <citation type="journal article" date="2010" name="Plant Cell">
        <title>The AP-3 beta adaptin mediates the biogenesis and function of lytic vacuoles in Arabidopsis.</title>
        <authorList>
            <person name="Feraru E."/>
            <person name="Paciorek T."/>
            <person name="Feraru M.I."/>
            <person name="Zwiewka M."/>
            <person name="De Groodt R."/>
            <person name="De Rycke R."/>
            <person name="Kleine-Vehn J."/>
            <person name="Friml J."/>
        </authorList>
    </citation>
    <scope>MUTANT PAT2</scope>
    <scope>DISRUPTION PHENOTYPE</scope>
    <scope>FUNCTION</scope>
    <scope>SUBCELLULAR LOCATION</scope>
</reference>
<reference key="7">
    <citation type="journal article" date="2011" name="Cell Res.">
        <title>The AP-3 adaptor complex is required for vacuolar function in Arabidopsis.</title>
        <authorList>
            <person name="Zwiewka M."/>
            <person name="Feraru E."/>
            <person name="Moeller B."/>
            <person name="Hwang I."/>
            <person name="Feraru M.I."/>
            <person name="Kleine-Vehn J."/>
            <person name="Weijers D."/>
            <person name="Friml J."/>
        </authorList>
    </citation>
    <scope>DISRUPTION PHENOTYPE</scope>
    <scope>FUNCTION</scope>
    <scope>COMPONENT OF THE AP-3 COMPLEX</scope>
</reference>